<accession>A1KUZ7</accession>
<dbReference type="EC" id="2.1.3.3" evidence="2"/>
<dbReference type="EMBL" id="AM421808">
    <property type="protein sequence ID" value="CAM10696.1"/>
    <property type="molecule type" value="Genomic_DNA"/>
</dbReference>
<dbReference type="RefSeq" id="WP_002220536.1">
    <property type="nucleotide sequence ID" value="NC_008767.1"/>
</dbReference>
<dbReference type="SMR" id="A1KUZ7"/>
<dbReference type="KEGG" id="nmc:NMC1493"/>
<dbReference type="HOGENOM" id="CLU_043846_3_1_4"/>
<dbReference type="UniPathway" id="UPA00068">
    <property type="reaction ID" value="UER00112"/>
</dbReference>
<dbReference type="Proteomes" id="UP000002286">
    <property type="component" value="Chromosome"/>
</dbReference>
<dbReference type="GO" id="GO:0005737">
    <property type="term" value="C:cytoplasm"/>
    <property type="evidence" value="ECO:0007669"/>
    <property type="project" value="UniProtKB-SubCell"/>
</dbReference>
<dbReference type="GO" id="GO:0016597">
    <property type="term" value="F:amino acid binding"/>
    <property type="evidence" value="ECO:0007669"/>
    <property type="project" value="InterPro"/>
</dbReference>
<dbReference type="GO" id="GO:0004585">
    <property type="term" value="F:ornithine carbamoyltransferase activity"/>
    <property type="evidence" value="ECO:0007669"/>
    <property type="project" value="UniProtKB-UniRule"/>
</dbReference>
<dbReference type="GO" id="GO:0042450">
    <property type="term" value="P:arginine biosynthetic process via ornithine"/>
    <property type="evidence" value="ECO:0007669"/>
    <property type="project" value="TreeGrafter"/>
</dbReference>
<dbReference type="GO" id="GO:0019240">
    <property type="term" value="P:citrulline biosynthetic process"/>
    <property type="evidence" value="ECO:0007669"/>
    <property type="project" value="TreeGrafter"/>
</dbReference>
<dbReference type="GO" id="GO:0006526">
    <property type="term" value="P:L-arginine biosynthetic process"/>
    <property type="evidence" value="ECO:0007669"/>
    <property type="project" value="UniProtKB-UniRule"/>
</dbReference>
<dbReference type="FunFam" id="3.40.50.1370:FF:000004">
    <property type="entry name" value="Ornithine carbamoyltransferase"/>
    <property type="match status" value="1"/>
</dbReference>
<dbReference type="Gene3D" id="3.40.50.1370">
    <property type="entry name" value="Aspartate/ornithine carbamoyltransferase"/>
    <property type="match status" value="2"/>
</dbReference>
<dbReference type="HAMAP" id="MF_01109">
    <property type="entry name" value="OTCase"/>
    <property type="match status" value="1"/>
</dbReference>
<dbReference type="InterPro" id="IPR006132">
    <property type="entry name" value="Asp/Orn_carbamoyltranf_P-bd"/>
</dbReference>
<dbReference type="InterPro" id="IPR006130">
    <property type="entry name" value="Asp/Orn_carbamoylTrfase"/>
</dbReference>
<dbReference type="InterPro" id="IPR036901">
    <property type="entry name" value="Asp/Orn_carbamoylTrfase_sf"/>
</dbReference>
<dbReference type="InterPro" id="IPR006131">
    <property type="entry name" value="Asp_carbamoyltransf_Asp/Orn-bd"/>
</dbReference>
<dbReference type="InterPro" id="IPR002292">
    <property type="entry name" value="Orn/put_carbamltrans"/>
</dbReference>
<dbReference type="InterPro" id="IPR024904">
    <property type="entry name" value="OTCase_ArgI"/>
</dbReference>
<dbReference type="NCBIfam" id="TIGR00658">
    <property type="entry name" value="orni_carb_tr"/>
    <property type="match status" value="1"/>
</dbReference>
<dbReference type="NCBIfam" id="NF002470">
    <property type="entry name" value="PRK01713.1"/>
    <property type="match status" value="1"/>
</dbReference>
<dbReference type="PANTHER" id="PTHR45753:SF2">
    <property type="entry name" value="ORNITHINE CARBAMOYLTRANSFERASE"/>
    <property type="match status" value="1"/>
</dbReference>
<dbReference type="PANTHER" id="PTHR45753">
    <property type="entry name" value="ORNITHINE CARBAMOYLTRANSFERASE, MITOCHONDRIAL"/>
    <property type="match status" value="1"/>
</dbReference>
<dbReference type="Pfam" id="PF00185">
    <property type="entry name" value="OTCace"/>
    <property type="match status" value="1"/>
</dbReference>
<dbReference type="Pfam" id="PF02729">
    <property type="entry name" value="OTCace_N"/>
    <property type="match status" value="1"/>
</dbReference>
<dbReference type="PRINTS" id="PR00100">
    <property type="entry name" value="AOTCASE"/>
</dbReference>
<dbReference type="PRINTS" id="PR00102">
    <property type="entry name" value="OTCASE"/>
</dbReference>
<dbReference type="SUPFAM" id="SSF53671">
    <property type="entry name" value="Aspartate/ornithine carbamoyltransferase"/>
    <property type="match status" value="1"/>
</dbReference>
<dbReference type="PROSITE" id="PS00097">
    <property type="entry name" value="CARBAMOYLTRANSFERASE"/>
    <property type="match status" value="1"/>
</dbReference>
<gene>
    <name evidence="2" type="primary">argF</name>
    <name type="ordered locus">NMC1493</name>
</gene>
<proteinExistence type="inferred from homology"/>
<keyword id="KW-0028">Amino-acid biosynthesis</keyword>
<keyword id="KW-0055">Arginine biosynthesis</keyword>
<keyword id="KW-0963">Cytoplasm</keyword>
<keyword id="KW-0808">Transferase</keyword>
<reference key="1">
    <citation type="journal article" date="2007" name="PLoS Genet.">
        <title>Meningococcal genetic variation mechanisms viewed through comparative analysis of serogroup C strain FAM18.</title>
        <authorList>
            <person name="Bentley S.D."/>
            <person name="Vernikos G.S."/>
            <person name="Snyder L.A.S."/>
            <person name="Churcher C."/>
            <person name="Arrowsmith C."/>
            <person name="Chillingworth T."/>
            <person name="Cronin A."/>
            <person name="Davis P.H."/>
            <person name="Holroyd N.E."/>
            <person name="Jagels K."/>
            <person name="Maddison M."/>
            <person name="Moule S."/>
            <person name="Rabbinowitsch E."/>
            <person name="Sharp S."/>
            <person name="Unwin L."/>
            <person name="Whitehead S."/>
            <person name="Quail M.A."/>
            <person name="Achtman M."/>
            <person name="Barrell B.G."/>
            <person name="Saunders N.J."/>
            <person name="Parkhill J."/>
        </authorList>
    </citation>
    <scope>NUCLEOTIDE SEQUENCE [LARGE SCALE GENOMIC DNA]</scope>
    <source>
        <strain>ATCC 700532 / DSM 15464 / FAM18</strain>
    </source>
</reference>
<feature type="chain" id="PRO_1000065107" description="Ornithine carbamoyltransferase">
    <location>
        <begin position="1"/>
        <end position="331"/>
    </location>
</feature>
<feature type="binding site" evidence="2">
    <location>
        <begin position="55"/>
        <end position="58"/>
    </location>
    <ligand>
        <name>carbamoyl phosphate</name>
        <dbReference type="ChEBI" id="CHEBI:58228"/>
    </ligand>
</feature>
<feature type="binding site" evidence="2">
    <location>
        <position position="82"/>
    </location>
    <ligand>
        <name>carbamoyl phosphate</name>
        <dbReference type="ChEBI" id="CHEBI:58228"/>
    </ligand>
</feature>
<feature type="binding site" evidence="2">
    <location>
        <position position="106"/>
    </location>
    <ligand>
        <name>carbamoyl phosphate</name>
        <dbReference type="ChEBI" id="CHEBI:58228"/>
    </ligand>
</feature>
<feature type="binding site" evidence="2">
    <location>
        <begin position="133"/>
        <end position="136"/>
    </location>
    <ligand>
        <name>carbamoyl phosphate</name>
        <dbReference type="ChEBI" id="CHEBI:58228"/>
    </ligand>
</feature>
<feature type="binding site" evidence="2">
    <location>
        <position position="166"/>
    </location>
    <ligand>
        <name>L-ornithine</name>
        <dbReference type="ChEBI" id="CHEBI:46911"/>
    </ligand>
</feature>
<feature type="binding site" evidence="2">
    <location>
        <position position="230"/>
    </location>
    <ligand>
        <name>L-ornithine</name>
        <dbReference type="ChEBI" id="CHEBI:46911"/>
    </ligand>
</feature>
<feature type="binding site" evidence="2">
    <location>
        <begin position="234"/>
        <end position="235"/>
    </location>
    <ligand>
        <name>L-ornithine</name>
        <dbReference type="ChEBI" id="CHEBI:46911"/>
    </ligand>
</feature>
<feature type="binding site" evidence="2">
    <location>
        <begin position="272"/>
        <end position="273"/>
    </location>
    <ligand>
        <name>carbamoyl phosphate</name>
        <dbReference type="ChEBI" id="CHEBI:58228"/>
    </ligand>
</feature>
<feature type="binding site" evidence="2">
    <location>
        <position position="317"/>
    </location>
    <ligand>
        <name>carbamoyl phosphate</name>
        <dbReference type="ChEBI" id="CHEBI:58228"/>
    </ligand>
</feature>
<name>OTC_NEIMF</name>
<organism>
    <name type="scientific">Neisseria meningitidis serogroup C / serotype 2a (strain ATCC 700532 / DSM 15464 / FAM18)</name>
    <dbReference type="NCBI Taxonomy" id="272831"/>
    <lineage>
        <taxon>Bacteria</taxon>
        <taxon>Pseudomonadati</taxon>
        <taxon>Pseudomonadota</taxon>
        <taxon>Betaproteobacteria</taxon>
        <taxon>Neisseriales</taxon>
        <taxon>Neisseriaceae</taxon>
        <taxon>Neisseria</taxon>
    </lineage>
</organism>
<comment type="function">
    <text evidence="1">Reversibly catalyzes the transfer of the carbamoyl group from carbamoyl phosphate (CP) to the N(epsilon) atom of ornithine (ORN) to produce L-citrulline.</text>
</comment>
<comment type="catalytic activity">
    <reaction evidence="2">
        <text>carbamoyl phosphate + L-ornithine = L-citrulline + phosphate + H(+)</text>
        <dbReference type="Rhea" id="RHEA:19513"/>
        <dbReference type="ChEBI" id="CHEBI:15378"/>
        <dbReference type="ChEBI" id="CHEBI:43474"/>
        <dbReference type="ChEBI" id="CHEBI:46911"/>
        <dbReference type="ChEBI" id="CHEBI:57743"/>
        <dbReference type="ChEBI" id="CHEBI:58228"/>
        <dbReference type="EC" id="2.1.3.3"/>
    </reaction>
</comment>
<comment type="pathway">
    <text evidence="2">Amino-acid biosynthesis; L-arginine biosynthesis; L-arginine from L-ornithine and carbamoyl phosphate: step 1/3.</text>
</comment>
<comment type="subcellular location">
    <subcellularLocation>
        <location evidence="2">Cytoplasm</location>
    </subcellularLocation>
</comment>
<comment type="similarity">
    <text evidence="2">Belongs to the aspartate/ornithine carbamoyltransferase superfamily. OTCase family.</text>
</comment>
<sequence>MNLKNRHFLKLLDFTPEEITAYLDLAAELKAAKKAGREIQRMKGKNIALIFEKTSTRTRCAFEVAARDQGAGVTYLEPSASQIGHKESIKDTARVLGRMYDGIEYRGFAQETVEELTKYAGVPVFNGLTNEFHPTQMLADALTMREHSGKPLNQTAFAYVGDARYNMGNSLLILGAKLGMDVRIGAPQSLWPSEGIIAAAHAAAKETGAKITLTENAHEAVKNVDFIHTDVWVSMGEPKEVWQERIDLLKDYRVTPELMAASGNPQVKFMHCLPAFHNRETKVGEWIYETFGLNGVEVTEEVFESPASIVFDQAENRMHTIKAVMVAALGD</sequence>
<protein>
    <recommendedName>
        <fullName evidence="2">Ornithine carbamoyltransferase</fullName>
        <shortName evidence="2">OTCase</shortName>
        <ecNumber evidence="2">2.1.3.3</ecNumber>
    </recommendedName>
</protein>
<evidence type="ECO:0000250" key="1"/>
<evidence type="ECO:0000255" key="2">
    <source>
        <dbReference type="HAMAP-Rule" id="MF_01109"/>
    </source>
</evidence>